<comment type="similarity">
    <text evidence="1">Belongs to the SfsA family.</text>
</comment>
<protein>
    <recommendedName>
        <fullName evidence="1">Sugar fermentation stimulation protein homolog</fullName>
    </recommendedName>
</protein>
<proteinExistence type="inferred from homology"/>
<name>SFSA_SYNP6</name>
<feature type="chain" id="PRO_0000152310" description="Sugar fermentation stimulation protein homolog">
    <location>
        <begin position="1"/>
        <end position="236"/>
    </location>
</feature>
<evidence type="ECO:0000255" key="1">
    <source>
        <dbReference type="HAMAP-Rule" id="MF_00095"/>
    </source>
</evidence>
<gene>
    <name evidence="1" type="primary">sfsA</name>
    <name type="ordered locus">syc2054_d</name>
</gene>
<accession>Q5N0C6</accession>
<organism>
    <name type="scientific">Synechococcus sp. (strain ATCC 27144 / PCC 6301 / SAUG 1402/1)</name>
    <name type="common">Anacystis nidulans</name>
    <dbReference type="NCBI Taxonomy" id="269084"/>
    <lineage>
        <taxon>Bacteria</taxon>
        <taxon>Bacillati</taxon>
        <taxon>Cyanobacteriota</taxon>
        <taxon>Cyanophyceae</taxon>
        <taxon>Synechococcales</taxon>
        <taxon>Synechococcaceae</taxon>
        <taxon>Synechococcus</taxon>
    </lineage>
</organism>
<sequence>MPQRLYTYPPLLRGRLLQRYKRFFADIELDSGETITAHCPNTGPMTGVCQMGNLVYVSKSDNPKRKLAYTWELIEVTDNEPTWVGVNTGLPNRVVQALLEQRCLPVLGDYGEVQREVPYGENSRIDFRLTGDRPIYVEVKNTTWTAGRLALFPDTVTTRGQKHLRELTAILLEARAVMLYFINRGDCTAFAPGDSADPTYGQLLRTGIAAGLEVYPCQFQISPEGIDFLGVAPLQL</sequence>
<dbReference type="EMBL" id="AP008231">
    <property type="protein sequence ID" value="BAD80244.1"/>
    <property type="molecule type" value="Genomic_DNA"/>
</dbReference>
<dbReference type="RefSeq" id="WP_011244364.1">
    <property type="nucleotide sequence ID" value="NZ_CP085785.1"/>
</dbReference>
<dbReference type="SMR" id="Q5N0C6"/>
<dbReference type="GeneID" id="72430915"/>
<dbReference type="KEGG" id="syc:syc2054_d"/>
<dbReference type="eggNOG" id="COG1489">
    <property type="taxonomic scope" value="Bacteria"/>
</dbReference>
<dbReference type="Proteomes" id="UP000001175">
    <property type="component" value="Chromosome"/>
</dbReference>
<dbReference type="GO" id="GO:0003677">
    <property type="term" value="F:DNA binding"/>
    <property type="evidence" value="ECO:0007669"/>
    <property type="project" value="InterPro"/>
</dbReference>
<dbReference type="CDD" id="cd22359">
    <property type="entry name" value="SfsA-like_bacterial"/>
    <property type="match status" value="1"/>
</dbReference>
<dbReference type="FunFam" id="2.40.50.580:FF:000001">
    <property type="entry name" value="Sugar fermentation stimulation protein A"/>
    <property type="match status" value="1"/>
</dbReference>
<dbReference type="Gene3D" id="2.40.50.580">
    <property type="match status" value="1"/>
</dbReference>
<dbReference type="Gene3D" id="3.40.1350.60">
    <property type="match status" value="1"/>
</dbReference>
<dbReference type="HAMAP" id="MF_00095">
    <property type="entry name" value="SfsA"/>
    <property type="match status" value="1"/>
</dbReference>
<dbReference type="InterPro" id="IPR005224">
    <property type="entry name" value="SfsA"/>
</dbReference>
<dbReference type="InterPro" id="IPR040452">
    <property type="entry name" value="SfsA_C"/>
</dbReference>
<dbReference type="InterPro" id="IPR041465">
    <property type="entry name" value="SfsA_N"/>
</dbReference>
<dbReference type="NCBIfam" id="TIGR00230">
    <property type="entry name" value="sfsA"/>
    <property type="match status" value="1"/>
</dbReference>
<dbReference type="PANTHER" id="PTHR30545">
    <property type="entry name" value="SUGAR FERMENTATION STIMULATION PROTEIN A"/>
    <property type="match status" value="1"/>
</dbReference>
<dbReference type="PANTHER" id="PTHR30545:SF2">
    <property type="entry name" value="SUGAR FERMENTATION STIMULATION PROTEIN A"/>
    <property type="match status" value="1"/>
</dbReference>
<dbReference type="Pfam" id="PF03749">
    <property type="entry name" value="SfsA"/>
    <property type="match status" value="1"/>
</dbReference>
<dbReference type="Pfam" id="PF17746">
    <property type="entry name" value="SfsA_N"/>
    <property type="match status" value="1"/>
</dbReference>
<reference key="1">
    <citation type="journal article" date="2007" name="Photosyn. Res.">
        <title>Complete nucleotide sequence of the freshwater unicellular cyanobacterium Synechococcus elongatus PCC 6301 chromosome: gene content and organization.</title>
        <authorList>
            <person name="Sugita C."/>
            <person name="Ogata K."/>
            <person name="Shikata M."/>
            <person name="Jikuya H."/>
            <person name="Takano J."/>
            <person name="Furumichi M."/>
            <person name="Kanehisa M."/>
            <person name="Omata T."/>
            <person name="Sugiura M."/>
            <person name="Sugita M."/>
        </authorList>
    </citation>
    <scope>NUCLEOTIDE SEQUENCE [LARGE SCALE GENOMIC DNA]</scope>
    <source>
        <strain>ATCC 27144 / PCC 6301 / SAUG 1402/1</strain>
    </source>
</reference>